<dbReference type="EC" id="3.4.21.92" evidence="1"/>
<dbReference type="EMBL" id="AE017226">
    <property type="protein sequence ID" value="AAS12188.1"/>
    <property type="molecule type" value="Genomic_DNA"/>
</dbReference>
<dbReference type="RefSeq" id="NP_972277.1">
    <property type="nucleotide sequence ID" value="NC_002967.9"/>
</dbReference>
<dbReference type="SMR" id="Q73M38"/>
<dbReference type="STRING" id="243275.TDE_1672"/>
<dbReference type="MEROPS" id="S14.001"/>
<dbReference type="PaxDb" id="243275-TDE_1672"/>
<dbReference type="GeneID" id="2740127"/>
<dbReference type="KEGG" id="tde:TDE_1672"/>
<dbReference type="PATRIC" id="fig|243275.7.peg.1598"/>
<dbReference type="eggNOG" id="COG0740">
    <property type="taxonomic scope" value="Bacteria"/>
</dbReference>
<dbReference type="HOGENOM" id="CLU_058707_3_2_12"/>
<dbReference type="OrthoDB" id="9802800at2"/>
<dbReference type="Proteomes" id="UP000008212">
    <property type="component" value="Chromosome"/>
</dbReference>
<dbReference type="GO" id="GO:0005737">
    <property type="term" value="C:cytoplasm"/>
    <property type="evidence" value="ECO:0007669"/>
    <property type="project" value="UniProtKB-SubCell"/>
</dbReference>
<dbReference type="GO" id="GO:0009368">
    <property type="term" value="C:endopeptidase Clp complex"/>
    <property type="evidence" value="ECO:0007669"/>
    <property type="project" value="TreeGrafter"/>
</dbReference>
<dbReference type="GO" id="GO:0004176">
    <property type="term" value="F:ATP-dependent peptidase activity"/>
    <property type="evidence" value="ECO:0007669"/>
    <property type="project" value="InterPro"/>
</dbReference>
<dbReference type="GO" id="GO:0051117">
    <property type="term" value="F:ATPase binding"/>
    <property type="evidence" value="ECO:0007669"/>
    <property type="project" value="TreeGrafter"/>
</dbReference>
<dbReference type="GO" id="GO:0004252">
    <property type="term" value="F:serine-type endopeptidase activity"/>
    <property type="evidence" value="ECO:0007669"/>
    <property type="project" value="UniProtKB-UniRule"/>
</dbReference>
<dbReference type="GO" id="GO:0006515">
    <property type="term" value="P:protein quality control for misfolded or incompletely synthesized proteins"/>
    <property type="evidence" value="ECO:0007669"/>
    <property type="project" value="TreeGrafter"/>
</dbReference>
<dbReference type="CDD" id="cd07017">
    <property type="entry name" value="S14_ClpP_2"/>
    <property type="match status" value="1"/>
</dbReference>
<dbReference type="FunFam" id="3.90.226.10:FF:000001">
    <property type="entry name" value="ATP-dependent Clp protease proteolytic subunit"/>
    <property type="match status" value="1"/>
</dbReference>
<dbReference type="Gene3D" id="3.90.226.10">
    <property type="entry name" value="2-enoyl-CoA Hydratase, Chain A, domain 1"/>
    <property type="match status" value="1"/>
</dbReference>
<dbReference type="HAMAP" id="MF_00444">
    <property type="entry name" value="ClpP"/>
    <property type="match status" value="1"/>
</dbReference>
<dbReference type="InterPro" id="IPR001907">
    <property type="entry name" value="ClpP"/>
</dbReference>
<dbReference type="InterPro" id="IPR029045">
    <property type="entry name" value="ClpP/crotonase-like_dom_sf"/>
</dbReference>
<dbReference type="InterPro" id="IPR023562">
    <property type="entry name" value="ClpP/TepA"/>
</dbReference>
<dbReference type="InterPro" id="IPR033135">
    <property type="entry name" value="ClpP_His_AS"/>
</dbReference>
<dbReference type="NCBIfam" id="TIGR00493">
    <property type="entry name" value="clpP"/>
    <property type="match status" value="1"/>
</dbReference>
<dbReference type="NCBIfam" id="NF001368">
    <property type="entry name" value="PRK00277.1"/>
    <property type="match status" value="1"/>
</dbReference>
<dbReference type="NCBIfam" id="NF009205">
    <property type="entry name" value="PRK12553.1"/>
    <property type="match status" value="1"/>
</dbReference>
<dbReference type="PANTHER" id="PTHR10381">
    <property type="entry name" value="ATP-DEPENDENT CLP PROTEASE PROTEOLYTIC SUBUNIT"/>
    <property type="match status" value="1"/>
</dbReference>
<dbReference type="PANTHER" id="PTHR10381:SF70">
    <property type="entry name" value="ATP-DEPENDENT CLP PROTEASE PROTEOLYTIC SUBUNIT"/>
    <property type="match status" value="1"/>
</dbReference>
<dbReference type="Pfam" id="PF00574">
    <property type="entry name" value="CLP_protease"/>
    <property type="match status" value="1"/>
</dbReference>
<dbReference type="PRINTS" id="PR00127">
    <property type="entry name" value="CLPPROTEASEP"/>
</dbReference>
<dbReference type="SUPFAM" id="SSF52096">
    <property type="entry name" value="ClpP/crotonase"/>
    <property type="match status" value="1"/>
</dbReference>
<dbReference type="PROSITE" id="PS00382">
    <property type="entry name" value="CLP_PROTEASE_HIS"/>
    <property type="match status" value="1"/>
</dbReference>
<evidence type="ECO:0000255" key="1">
    <source>
        <dbReference type="HAMAP-Rule" id="MF_00444"/>
    </source>
</evidence>
<sequence length="197" mass="21751">MSTLVPYVIEQTGNGERSYDIFSRLLKDRIIFVDGEINDMSADLVVAQLLFLEAQNPDKDISLYINSPGGSVTAGLAIYDTMQHIRPDVQTICLGQCASMGAVLLAGGAKNKRYALPSSRVMIHQPWGGVQGQAVDINIQAKEIVRLKKLTIKYFAENTGKTEKQVAADMERDFFMSAEEALTYGIIDTVMNRRKDG</sequence>
<feature type="chain" id="PRO_0000179702" description="ATP-dependent Clp protease proteolytic subunit 1">
    <location>
        <begin position="1"/>
        <end position="197"/>
    </location>
</feature>
<feature type="active site" description="Nucleophile" evidence="1">
    <location>
        <position position="99"/>
    </location>
</feature>
<feature type="active site" evidence="1">
    <location>
        <position position="124"/>
    </location>
</feature>
<accession>Q73M38</accession>
<name>CLPP1_TREDE</name>
<organism>
    <name type="scientific">Treponema denticola (strain ATCC 35405 / DSM 14222 / CIP 103919 / JCM 8153 / KCTC 15104)</name>
    <dbReference type="NCBI Taxonomy" id="243275"/>
    <lineage>
        <taxon>Bacteria</taxon>
        <taxon>Pseudomonadati</taxon>
        <taxon>Spirochaetota</taxon>
        <taxon>Spirochaetia</taxon>
        <taxon>Spirochaetales</taxon>
        <taxon>Treponemataceae</taxon>
        <taxon>Treponema</taxon>
    </lineage>
</organism>
<keyword id="KW-0963">Cytoplasm</keyword>
<keyword id="KW-0378">Hydrolase</keyword>
<keyword id="KW-0645">Protease</keyword>
<keyword id="KW-1185">Reference proteome</keyword>
<keyword id="KW-0720">Serine protease</keyword>
<protein>
    <recommendedName>
        <fullName evidence="1">ATP-dependent Clp protease proteolytic subunit 1</fullName>
        <ecNumber evidence="1">3.4.21.92</ecNumber>
    </recommendedName>
    <alternativeName>
        <fullName evidence="1">Endopeptidase Clp 1</fullName>
    </alternativeName>
</protein>
<proteinExistence type="inferred from homology"/>
<gene>
    <name evidence="1" type="primary">clpP1</name>
    <name type="ordered locus">TDE_1672</name>
</gene>
<reference key="1">
    <citation type="journal article" date="2004" name="Proc. Natl. Acad. Sci. U.S.A.">
        <title>Comparison of the genome of the oral pathogen Treponema denticola with other spirochete genomes.</title>
        <authorList>
            <person name="Seshadri R."/>
            <person name="Myers G.S.A."/>
            <person name="Tettelin H."/>
            <person name="Eisen J.A."/>
            <person name="Heidelberg J.F."/>
            <person name="Dodson R.J."/>
            <person name="Davidsen T.M."/>
            <person name="DeBoy R.T."/>
            <person name="Fouts D.E."/>
            <person name="Haft D.H."/>
            <person name="Selengut J."/>
            <person name="Ren Q."/>
            <person name="Brinkac L.M."/>
            <person name="Madupu R."/>
            <person name="Kolonay J.F."/>
            <person name="Durkin S.A."/>
            <person name="Daugherty S.C."/>
            <person name="Shetty J."/>
            <person name="Shvartsbeyn A."/>
            <person name="Gebregeorgis E."/>
            <person name="Geer K."/>
            <person name="Tsegaye G."/>
            <person name="Malek J.A."/>
            <person name="Ayodeji B."/>
            <person name="Shatsman S."/>
            <person name="McLeod M.P."/>
            <person name="Smajs D."/>
            <person name="Howell J.K."/>
            <person name="Pal S."/>
            <person name="Amin A."/>
            <person name="Vashisth P."/>
            <person name="McNeill T.Z."/>
            <person name="Xiang Q."/>
            <person name="Sodergren E."/>
            <person name="Baca E."/>
            <person name="Weinstock G.M."/>
            <person name="Norris S.J."/>
            <person name="Fraser C.M."/>
            <person name="Paulsen I.T."/>
        </authorList>
    </citation>
    <scope>NUCLEOTIDE SEQUENCE [LARGE SCALE GENOMIC DNA]</scope>
    <source>
        <strain>ATCC 35405 / DSM 14222 / CIP 103919 / JCM 8153 / KCTC 15104</strain>
    </source>
</reference>
<comment type="function">
    <text evidence="1">Cleaves peptides in various proteins in a process that requires ATP hydrolysis. Has a chymotrypsin-like activity. Plays a major role in the degradation of misfolded proteins.</text>
</comment>
<comment type="catalytic activity">
    <reaction evidence="1">
        <text>Hydrolysis of proteins to small peptides in the presence of ATP and magnesium. alpha-casein is the usual test substrate. In the absence of ATP, only oligopeptides shorter than five residues are hydrolyzed (such as succinyl-Leu-Tyr-|-NHMec, and Leu-Tyr-Leu-|-Tyr-Trp, in which cleavage of the -Tyr-|-Leu- and -Tyr-|-Trp bonds also occurs).</text>
        <dbReference type="EC" id="3.4.21.92"/>
    </reaction>
</comment>
<comment type="subunit">
    <text evidence="1">Fourteen ClpP subunits assemble into 2 heptameric rings which stack back to back to give a disk-like structure with a central cavity, resembling the structure of eukaryotic proteasomes.</text>
</comment>
<comment type="subcellular location">
    <subcellularLocation>
        <location evidence="1">Cytoplasm</location>
    </subcellularLocation>
</comment>
<comment type="similarity">
    <text evidence="1">Belongs to the peptidase S14 family.</text>
</comment>